<organism>
    <name type="scientific">Synechocystis sp. (strain ATCC 27184 / PCC 6803 / Kazusa)</name>
    <dbReference type="NCBI Taxonomy" id="1111708"/>
    <lineage>
        <taxon>Bacteria</taxon>
        <taxon>Bacillati</taxon>
        <taxon>Cyanobacteriota</taxon>
        <taxon>Cyanophyceae</taxon>
        <taxon>Synechococcales</taxon>
        <taxon>Merismopediaceae</taxon>
        <taxon>Synechocystis</taxon>
    </lineage>
</organism>
<sequence length="327" mass="36041">MGIGVNSDPKVVHHQSIPKPNAMAIANYRAITTKQWQTWVEAARLQALNGKLPQYIPQLSLVDPGNFALDIGDQNGIIYEAGDTDLTFSLMSVVKPFLWLYILHHRGWQWAEQKVGDRPSHLPFNSVEQLEQDGGYPRNTMVNSGAICLAGHIPGATIEQRCENFLTWLNHTAQCQLWLDQELLASVHSLPNPRNLAIAHLLAAKGYVEDATLALETYNQLCCLSGCLKDLFKLGLMLQCPQPPLQPDTTARVKATMAKAGLYEMSEAFFRRTGFICKSGVSGLILACLPAPSPTIFACYSPPLNEEGNPVAPLALLEFLAEFTSRN</sequence>
<reference key="1">
    <citation type="journal article" date="1996" name="DNA Res.">
        <title>Sequence analysis of the genome of the unicellular cyanobacterium Synechocystis sp. strain PCC6803. II. Sequence determination of the entire genome and assignment of potential protein-coding regions.</title>
        <authorList>
            <person name="Kaneko T."/>
            <person name="Sato S."/>
            <person name="Kotani H."/>
            <person name="Tanaka A."/>
            <person name="Asamizu E."/>
            <person name="Nakamura Y."/>
            <person name="Miyajima N."/>
            <person name="Hirosawa M."/>
            <person name="Sugiura M."/>
            <person name="Sasamoto S."/>
            <person name="Kimura T."/>
            <person name="Hosouchi T."/>
            <person name="Matsuno A."/>
            <person name="Muraki A."/>
            <person name="Nakazaki N."/>
            <person name="Naruo K."/>
            <person name="Okumura S."/>
            <person name="Shimpo S."/>
            <person name="Takeuchi C."/>
            <person name="Wada T."/>
            <person name="Watanabe A."/>
            <person name="Yamada M."/>
            <person name="Yasuda M."/>
            <person name="Tabata S."/>
        </authorList>
    </citation>
    <scope>NUCLEOTIDE SEQUENCE [LARGE SCALE GENOMIC DNA]</scope>
    <source>
        <strain>ATCC 27184 / PCC 6803 / Kazusa</strain>
    </source>
</reference>
<accession>P73903</accession>
<dbReference type="EC" id="3.5.1.2" evidence="1"/>
<dbReference type="EMBL" id="BA000022">
    <property type="protein sequence ID" value="BAA17967.1"/>
    <property type="molecule type" value="Genomic_DNA"/>
</dbReference>
<dbReference type="PIR" id="S75105">
    <property type="entry name" value="S75105"/>
</dbReference>
<dbReference type="SMR" id="P73903"/>
<dbReference type="FunCoup" id="P73903">
    <property type="interactions" value="109"/>
</dbReference>
<dbReference type="STRING" id="1148.gene:10498836"/>
<dbReference type="PaxDb" id="1148-1653050"/>
<dbReference type="EnsemblBacteria" id="BAA17967">
    <property type="protein sequence ID" value="BAA17967"/>
    <property type="gene ID" value="BAA17967"/>
</dbReference>
<dbReference type="KEGG" id="syn:slr2079"/>
<dbReference type="eggNOG" id="COG2066">
    <property type="taxonomic scope" value="Bacteria"/>
</dbReference>
<dbReference type="InParanoid" id="P73903"/>
<dbReference type="PhylomeDB" id="P73903"/>
<dbReference type="BRENDA" id="3.5.1.2">
    <property type="organism ID" value="6192"/>
</dbReference>
<dbReference type="Proteomes" id="UP000001425">
    <property type="component" value="Chromosome"/>
</dbReference>
<dbReference type="GO" id="GO:0004359">
    <property type="term" value="F:glutaminase activity"/>
    <property type="evidence" value="ECO:0007669"/>
    <property type="project" value="UniProtKB-UniRule"/>
</dbReference>
<dbReference type="GO" id="GO:0006541">
    <property type="term" value="P:glutamine metabolic process"/>
    <property type="evidence" value="ECO:0007669"/>
    <property type="project" value="InterPro"/>
</dbReference>
<dbReference type="FunFam" id="3.40.710.10:FF:000140">
    <property type="entry name" value="Glutaminase"/>
    <property type="match status" value="1"/>
</dbReference>
<dbReference type="Gene3D" id="3.40.710.10">
    <property type="entry name" value="DD-peptidase/beta-lactamase superfamily"/>
    <property type="match status" value="1"/>
</dbReference>
<dbReference type="HAMAP" id="MF_00313">
    <property type="entry name" value="Glutaminase"/>
    <property type="match status" value="1"/>
</dbReference>
<dbReference type="InterPro" id="IPR012338">
    <property type="entry name" value="Beta-lactam/transpept-like"/>
</dbReference>
<dbReference type="InterPro" id="IPR015868">
    <property type="entry name" value="Glutaminase"/>
</dbReference>
<dbReference type="PANTHER" id="PTHR12544">
    <property type="entry name" value="GLUTAMINASE"/>
    <property type="match status" value="1"/>
</dbReference>
<dbReference type="PANTHER" id="PTHR12544:SF29">
    <property type="entry name" value="GLUTAMINASE"/>
    <property type="match status" value="1"/>
</dbReference>
<dbReference type="Pfam" id="PF04960">
    <property type="entry name" value="Glutaminase"/>
    <property type="match status" value="1"/>
</dbReference>
<dbReference type="SUPFAM" id="SSF56601">
    <property type="entry name" value="beta-lactamase/transpeptidase-like"/>
    <property type="match status" value="1"/>
</dbReference>
<keyword id="KW-0378">Hydrolase</keyword>
<keyword id="KW-1185">Reference proteome</keyword>
<proteinExistence type="inferred from homology"/>
<feature type="chain" id="PRO_0000110628" description="Glutaminase">
    <location>
        <begin position="1"/>
        <end position="327"/>
    </location>
</feature>
<feature type="binding site" evidence="1">
    <location>
        <position position="92"/>
    </location>
    <ligand>
        <name>substrate</name>
    </ligand>
</feature>
<feature type="binding site" evidence="1">
    <location>
        <position position="143"/>
    </location>
    <ligand>
        <name>substrate</name>
    </ligand>
</feature>
<feature type="binding site" evidence="1">
    <location>
        <position position="195"/>
    </location>
    <ligand>
        <name>substrate</name>
    </ligand>
</feature>
<feature type="binding site" evidence="1">
    <location>
        <position position="218"/>
    </location>
    <ligand>
        <name>substrate</name>
    </ligand>
</feature>
<feature type="binding site" evidence="1">
    <location>
        <position position="263"/>
    </location>
    <ligand>
        <name>substrate</name>
    </ligand>
</feature>
<feature type="binding site" evidence="1">
    <location>
        <position position="281"/>
    </location>
    <ligand>
        <name>substrate</name>
    </ligand>
</feature>
<protein>
    <recommendedName>
        <fullName evidence="1">Glutaminase</fullName>
        <ecNumber evidence="1">3.5.1.2</ecNumber>
    </recommendedName>
</protein>
<gene>
    <name evidence="1" type="primary">glsA</name>
    <name type="ordered locus">slr2079</name>
</gene>
<evidence type="ECO:0000255" key="1">
    <source>
        <dbReference type="HAMAP-Rule" id="MF_00313"/>
    </source>
</evidence>
<name>GLSA_SYNY3</name>
<comment type="catalytic activity">
    <reaction evidence="1">
        <text>L-glutamine + H2O = L-glutamate + NH4(+)</text>
        <dbReference type="Rhea" id="RHEA:15889"/>
        <dbReference type="ChEBI" id="CHEBI:15377"/>
        <dbReference type="ChEBI" id="CHEBI:28938"/>
        <dbReference type="ChEBI" id="CHEBI:29985"/>
        <dbReference type="ChEBI" id="CHEBI:58359"/>
        <dbReference type="EC" id="3.5.1.2"/>
    </reaction>
</comment>
<comment type="subunit">
    <text evidence="1">Homotetramer.</text>
</comment>
<comment type="similarity">
    <text evidence="1">Belongs to the glutaminase family.</text>
</comment>